<feature type="chain" id="PRO_0000107896" description="Phosphocarrier protein NPr">
    <location>
        <begin position="1"/>
        <end position="90"/>
    </location>
</feature>
<feature type="domain" description="HPr" evidence="2">
    <location>
        <begin position="2"/>
        <end position="90"/>
    </location>
</feature>
<feature type="active site" description="Pros-phosphohistidine intermediate" evidence="2">
    <location>
        <position position="16"/>
    </location>
</feature>
<reference key="1">
    <citation type="journal article" date="2002" name="Nucleic Acids Res.">
        <title>Genome sequence of Shigella flexneri 2a: insights into pathogenicity through comparison with genomes of Escherichia coli K12 and O157.</title>
        <authorList>
            <person name="Jin Q."/>
            <person name="Yuan Z."/>
            <person name="Xu J."/>
            <person name="Wang Y."/>
            <person name="Shen Y."/>
            <person name="Lu W."/>
            <person name="Wang J."/>
            <person name="Liu H."/>
            <person name="Yang J."/>
            <person name="Yang F."/>
            <person name="Zhang X."/>
            <person name="Zhang J."/>
            <person name="Yang G."/>
            <person name="Wu H."/>
            <person name="Qu D."/>
            <person name="Dong J."/>
            <person name="Sun L."/>
            <person name="Xue Y."/>
            <person name="Zhao A."/>
            <person name="Gao Y."/>
            <person name="Zhu J."/>
            <person name="Kan B."/>
            <person name="Ding K."/>
            <person name="Chen S."/>
            <person name="Cheng H."/>
            <person name="Yao Z."/>
            <person name="He B."/>
            <person name="Chen R."/>
            <person name="Ma D."/>
            <person name="Qiang B."/>
            <person name="Wen Y."/>
            <person name="Hou Y."/>
            <person name="Yu J."/>
        </authorList>
    </citation>
    <scope>NUCLEOTIDE SEQUENCE [LARGE SCALE GENOMIC DNA]</scope>
    <source>
        <strain>301 / Serotype 2a</strain>
    </source>
</reference>
<reference key="2">
    <citation type="journal article" date="2003" name="Infect. Immun.">
        <title>Complete genome sequence and comparative genomics of Shigella flexneri serotype 2a strain 2457T.</title>
        <authorList>
            <person name="Wei J."/>
            <person name="Goldberg M.B."/>
            <person name="Burland V."/>
            <person name="Venkatesan M.M."/>
            <person name="Deng W."/>
            <person name="Fournier G."/>
            <person name="Mayhew G.F."/>
            <person name="Plunkett G. III"/>
            <person name="Rose D.J."/>
            <person name="Darling A."/>
            <person name="Mau B."/>
            <person name="Perna N.T."/>
            <person name="Payne S.M."/>
            <person name="Runyen-Janecky L.J."/>
            <person name="Zhou S."/>
            <person name="Schwartz D.C."/>
            <person name="Blattner F.R."/>
        </authorList>
    </citation>
    <scope>NUCLEOTIDE SEQUENCE [LARGE SCALE GENOMIC DNA]</scope>
    <source>
        <strain>ATCC 700930 / 2457T / Serotype 2a</strain>
    </source>
</reference>
<organism>
    <name type="scientific">Shigella flexneri</name>
    <dbReference type="NCBI Taxonomy" id="623"/>
    <lineage>
        <taxon>Bacteria</taxon>
        <taxon>Pseudomonadati</taxon>
        <taxon>Pseudomonadota</taxon>
        <taxon>Gammaproteobacteria</taxon>
        <taxon>Enterobacterales</taxon>
        <taxon>Enterobacteriaceae</taxon>
        <taxon>Shigella</taxon>
    </lineage>
</organism>
<accession>P0A9N3</accession>
<accession>P33996</accession>
<name>PTSO_SHIFL</name>
<comment type="function">
    <text evidence="1">Component of the phosphoenolpyruvate-dependent nitrogen-metabolic phosphotransferase system (nitrogen-metabolic PTS), that seems to be involved in regulating nitrogen metabolism. The phosphoryl group from phosphoenolpyruvate (PEP) is transferred to the phosphoryl carrier protein NPr by enzyme I-Ntr. Phospho-NPr then transfers it to EIIA-Ntr. Could function in the transcriptional regulation of sigma-54 dependent operons in conjunction with the NPr (PtsO) and EIIA-Ntr (PtsN) proteins.</text>
</comment>
<comment type="subcellular location">
    <subcellularLocation>
        <location evidence="1">Cytoplasm</location>
    </subcellularLocation>
</comment>
<comment type="similarity">
    <text evidence="3">Belongs to the HPr family.</text>
</comment>
<evidence type="ECO:0000250" key="1"/>
<evidence type="ECO:0000255" key="2">
    <source>
        <dbReference type="PROSITE-ProRule" id="PRU00681"/>
    </source>
</evidence>
<evidence type="ECO:0000305" key="3"/>
<keyword id="KW-0963">Cytoplasm</keyword>
<keyword id="KW-0598">Phosphotransferase system</keyword>
<keyword id="KW-1185">Reference proteome</keyword>
<gene>
    <name type="primary">ptsO</name>
    <name type="ordered locus">SF3246</name>
    <name type="ordered locus">S3464</name>
</gene>
<proteinExistence type="inferred from homology"/>
<protein>
    <recommendedName>
        <fullName>Phosphocarrier protein NPr</fullName>
    </recommendedName>
    <alternativeName>
        <fullName>Nitrogen-related HPr</fullName>
    </alternativeName>
</protein>
<sequence length="90" mass="9810">MTVKQTVEITNKLGMHARPAMKLFELMQGFDAEVLLRNDEGTEAEANSVIALLMLDSAKGRQIEVEATGPQEEEALAAVIALFNSGFDED</sequence>
<dbReference type="EMBL" id="AE005674">
    <property type="protein sequence ID" value="AAN44712.1"/>
    <property type="molecule type" value="Genomic_DNA"/>
</dbReference>
<dbReference type="EMBL" id="AE014073">
    <property type="protein sequence ID" value="AAP18526.1"/>
    <property type="molecule type" value="Genomic_DNA"/>
</dbReference>
<dbReference type="RefSeq" id="NP_709005.1">
    <property type="nucleotide sequence ID" value="NC_004337.2"/>
</dbReference>
<dbReference type="SMR" id="P0A9N3"/>
<dbReference type="STRING" id="198214.SF3246"/>
<dbReference type="PaxDb" id="198214-SF3246"/>
<dbReference type="GeneID" id="1023507"/>
<dbReference type="KEGG" id="sfl:SF3246"/>
<dbReference type="KEGG" id="sfx:S3464"/>
<dbReference type="PATRIC" id="fig|198214.7.peg.3847"/>
<dbReference type="HOGENOM" id="CLU_136230_1_3_6"/>
<dbReference type="Proteomes" id="UP000001006">
    <property type="component" value="Chromosome"/>
</dbReference>
<dbReference type="Proteomes" id="UP000002673">
    <property type="component" value="Chromosome"/>
</dbReference>
<dbReference type="GO" id="GO:0005737">
    <property type="term" value="C:cytoplasm"/>
    <property type="evidence" value="ECO:0007669"/>
    <property type="project" value="UniProtKB-SubCell"/>
</dbReference>
<dbReference type="GO" id="GO:0009401">
    <property type="term" value="P:phosphoenolpyruvate-dependent sugar phosphotransferase system"/>
    <property type="evidence" value="ECO:0007669"/>
    <property type="project" value="UniProtKB-KW"/>
</dbReference>
<dbReference type="CDD" id="cd00367">
    <property type="entry name" value="PTS-HPr_like"/>
    <property type="match status" value="1"/>
</dbReference>
<dbReference type="FunFam" id="3.30.1340.10:FF:000002">
    <property type="entry name" value="PTS phosphocarrier protein NPr"/>
    <property type="match status" value="1"/>
</dbReference>
<dbReference type="Gene3D" id="3.30.1340.10">
    <property type="entry name" value="HPr-like"/>
    <property type="match status" value="1"/>
</dbReference>
<dbReference type="InterPro" id="IPR050399">
    <property type="entry name" value="HPr"/>
</dbReference>
<dbReference type="InterPro" id="IPR000032">
    <property type="entry name" value="HPr-like"/>
</dbReference>
<dbReference type="InterPro" id="IPR035895">
    <property type="entry name" value="HPr-like_sf"/>
</dbReference>
<dbReference type="InterPro" id="IPR001020">
    <property type="entry name" value="PTS_HPr_His_P_site"/>
</dbReference>
<dbReference type="InterPro" id="IPR002114">
    <property type="entry name" value="PTS_HPr_Ser_P_site"/>
</dbReference>
<dbReference type="NCBIfam" id="NF008146">
    <property type="entry name" value="PRK10897.1"/>
    <property type="match status" value="1"/>
</dbReference>
<dbReference type="NCBIfam" id="TIGR01003">
    <property type="entry name" value="PTS_HPr_family"/>
    <property type="match status" value="1"/>
</dbReference>
<dbReference type="PANTHER" id="PTHR33705">
    <property type="entry name" value="PHOSPHOCARRIER PROTEIN HPR"/>
    <property type="match status" value="1"/>
</dbReference>
<dbReference type="PANTHER" id="PTHR33705:SF2">
    <property type="entry name" value="PHOSPHOCARRIER PROTEIN NPR"/>
    <property type="match status" value="1"/>
</dbReference>
<dbReference type="Pfam" id="PF00381">
    <property type="entry name" value="PTS-HPr"/>
    <property type="match status" value="1"/>
</dbReference>
<dbReference type="PRINTS" id="PR00107">
    <property type="entry name" value="PHOSPHOCPHPR"/>
</dbReference>
<dbReference type="SUPFAM" id="SSF55594">
    <property type="entry name" value="HPr-like"/>
    <property type="match status" value="1"/>
</dbReference>
<dbReference type="PROSITE" id="PS51350">
    <property type="entry name" value="PTS_HPR_DOM"/>
    <property type="match status" value="1"/>
</dbReference>
<dbReference type="PROSITE" id="PS00369">
    <property type="entry name" value="PTS_HPR_HIS"/>
    <property type="match status" value="1"/>
</dbReference>
<dbReference type="PROSITE" id="PS00589">
    <property type="entry name" value="PTS_HPR_SER"/>
    <property type="match status" value="1"/>
</dbReference>